<accession>Q81LB8</accession>
<accession>Q6HSS1</accession>
<accession>Q6KM14</accession>
<name>TIG_BACAN</name>
<dbReference type="EC" id="5.2.1.8" evidence="1"/>
<dbReference type="EMBL" id="AE016879">
    <property type="protein sequence ID" value="AAP28404.1"/>
    <property type="molecule type" value="Genomic_DNA"/>
</dbReference>
<dbReference type="EMBL" id="AE017334">
    <property type="protein sequence ID" value="AAT33828.1"/>
    <property type="molecule type" value="Genomic_DNA"/>
</dbReference>
<dbReference type="EMBL" id="AE017225">
    <property type="protein sequence ID" value="AAT56668.1"/>
    <property type="molecule type" value="Genomic_DNA"/>
</dbReference>
<dbReference type="RefSeq" id="NP_846918.1">
    <property type="nucleotide sequence ID" value="NC_003997.3"/>
</dbReference>
<dbReference type="RefSeq" id="WP_000729253.1">
    <property type="nucleotide sequence ID" value="NZ_WXXJ01000027.1"/>
</dbReference>
<dbReference type="RefSeq" id="YP_030617.1">
    <property type="nucleotide sequence ID" value="NC_005945.1"/>
</dbReference>
<dbReference type="SMR" id="Q81LB8"/>
<dbReference type="IntAct" id="Q81LB8">
    <property type="interactions" value="3"/>
</dbReference>
<dbReference type="STRING" id="261594.GBAA_4705"/>
<dbReference type="DNASU" id="1083666"/>
<dbReference type="GeneID" id="45024345"/>
<dbReference type="KEGG" id="ban:BA_4705"/>
<dbReference type="KEGG" id="bar:GBAA_4705"/>
<dbReference type="KEGG" id="bat:BAS4370"/>
<dbReference type="PATRIC" id="fig|198094.11.peg.4670"/>
<dbReference type="eggNOG" id="COG0544">
    <property type="taxonomic scope" value="Bacteria"/>
</dbReference>
<dbReference type="HOGENOM" id="CLU_033058_3_2_9"/>
<dbReference type="OMA" id="KGIKTQF"/>
<dbReference type="OrthoDB" id="9767721at2"/>
<dbReference type="Proteomes" id="UP000000427">
    <property type="component" value="Chromosome"/>
</dbReference>
<dbReference type="Proteomes" id="UP000000594">
    <property type="component" value="Chromosome"/>
</dbReference>
<dbReference type="GO" id="GO:0005737">
    <property type="term" value="C:cytoplasm"/>
    <property type="evidence" value="ECO:0007669"/>
    <property type="project" value="UniProtKB-SubCell"/>
</dbReference>
<dbReference type="GO" id="GO:0003755">
    <property type="term" value="F:peptidyl-prolyl cis-trans isomerase activity"/>
    <property type="evidence" value="ECO:0007669"/>
    <property type="project" value="UniProtKB-UniRule"/>
</dbReference>
<dbReference type="GO" id="GO:0044183">
    <property type="term" value="F:protein folding chaperone"/>
    <property type="evidence" value="ECO:0007669"/>
    <property type="project" value="TreeGrafter"/>
</dbReference>
<dbReference type="GO" id="GO:0043022">
    <property type="term" value="F:ribosome binding"/>
    <property type="evidence" value="ECO:0007669"/>
    <property type="project" value="TreeGrafter"/>
</dbReference>
<dbReference type="GO" id="GO:0051083">
    <property type="term" value="P:'de novo' cotranslational protein folding"/>
    <property type="evidence" value="ECO:0007669"/>
    <property type="project" value="TreeGrafter"/>
</dbReference>
<dbReference type="GO" id="GO:0051301">
    <property type="term" value="P:cell division"/>
    <property type="evidence" value="ECO:0007669"/>
    <property type="project" value="UniProtKB-KW"/>
</dbReference>
<dbReference type="GO" id="GO:0061077">
    <property type="term" value="P:chaperone-mediated protein folding"/>
    <property type="evidence" value="ECO:0007669"/>
    <property type="project" value="TreeGrafter"/>
</dbReference>
<dbReference type="GO" id="GO:0015031">
    <property type="term" value="P:protein transport"/>
    <property type="evidence" value="ECO:0007669"/>
    <property type="project" value="UniProtKB-UniRule"/>
</dbReference>
<dbReference type="GO" id="GO:0043335">
    <property type="term" value="P:protein unfolding"/>
    <property type="evidence" value="ECO:0007669"/>
    <property type="project" value="TreeGrafter"/>
</dbReference>
<dbReference type="FunFam" id="3.10.50.40:FF:000001">
    <property type="entry name" value="Trigger factor"/>
    <property type="match status" value="1"/>
</dbReference>
<dbReference type="FunFam" id="3.30.70.1050:FF:000002">
    <property type="entry name" value="Trigger factor"/>
    <property type="match status" value="1"/>
</dbReference>
<dbReference type="Gene3D" id="3.10.50.40">
    <property type="match status" value="1"/>
</dbReference>
<dbReference type="Gene3D" id="3.30.70.1050">
    <property type="entry name" value="Trigger factor ribosome-binding domain"/>
    <property type="match status" value="1"/>
</dbReference>
<dbReference type="Gene3D" id="1.10.3120.10">
    <property type="entry name" value="Trigger factor, C-terminal domain"/>
    <property type="match status" value="1"/>
</dbReference>
<dbReference type="HAMAP" id="MF_00303">
    <property type="entry name" value="Trigger_factor_Tig"/>
    <property type="match status" value="1"/>
</dbReference>
<dbReference type="InterPro" id="IPR046357">
    <property type="entry name" value="PPIase_dom_sf"/>
</dbReference>
<dbReference type="InterPro" id="IPR001179">
    <property type="entry name" value="PPIase_FKBP_dom"/>
</dbReference>
<dbReference type="InterPro" id="IPR005215">
    <property type="entry name" value="Trig_fac"/>
</dbReference>
<dbReference type="InterPro" id="IPR008880">
    <property type="entry name" value="Trigger_fac_C"/>
</dbReference>
<dbReference type="InterPro" id="IPR037041">
    <property type="entry name" value="Trigger_fac_C_sf"/>
</dbReference>
<dbReference type="InterPro" id="IPR008881">
    <property type="entry name" value="Trigger_fac_ribosome-bd_bac"/>
</dbReference>
<dbReference type="InterPro" id="IPR036611">
    <property type="entry name" value="Trigger_fac_ribosome-bd_sf"/>
</dbReference>
<dbReference type="InterPro" id="IPR027304">
    <property type="entry name" value="Trigger_fact/SurA_dom_sf"/>
</dbReference>
<dbReference type="NCBIfam" id="TIGR00115">
    <property type="entry name" value="tig"/>
    <property type="match status" value="1"/>
</dbReference>
<dbReference type="PANTHER" id="PTHR30560">
    <property type="entry name" value="TRIGGER FACTOR CHAPERONE AND PEPTIDYL-PROLYL CIS/TRANS ISOMERASE"/>
    <property type="match status" value="1"/>
</dbReference>
<dbReference type="PANTHER" id="PTHR30560:SF3">
    <property type="entry name" value="TRIGGER FACTOR-LIKE PROTEIN TIG, CHLOROPLASTIC"/>
    <property type="match status" value="1"/>
</dbReference>
<dbReference type="Pfam" id="PF00254">
    <property type="entry name" value="FKBP_C"/>
    <property type="match status" value="1"/>
</dbReference>
<dbReference type="Pfam" id="PF05698">
    <property type="entry name" value="Trigger_C"/>
    <property type="match status" value="1"/>
</dbReference>
<dbReference type="Pfam" id="PF05697">
    <property type="entry name" value="Trigger_N"/>
    <property type="match status" value="1"/>
</dbReference>
<dbReference type="PIRSF" id="PIRSF003095">
    <property type="entry name" value="Trigger_factor"/>
    <property type="match status" value="1"/>
</dbReference>
<dbReference type="SUPFAM" id="SSF54534">
    <property type="entry name" value="FKBP-like"/>
    <property type="match status" value="1"/>
</dbReference>
<dbReference type="SUPFAM" id="SSF109998">
    <property type="entry name" value="Triger factor/SurA peptide-binding domain-like"/>
    <property type="match status" value="1"/>
</dbReference>
<dbReference type="SUPFAM" id="SSF102735">
    <property type="entry name" value="Trigger factor ribosome-binding domain"/>
    <property type="match status" value="1"/>
</dbReference>
<dbReference type="PROSITE" id="PS50059">
    <property type="entry name" value="FKBP_PPIASE"/>
    <property type="match status" value="1"/>
</dbReference>
<comment type="function">
    <text evidence="1">Involved in protein export. Acts as a chaperone by maintaining the newly synthesized protein in an open conformation. Functions as a peptidyl-prolyl cis-trans isomerase.</text>
</comment>
<comment type="catalytic activity">
    <reaction evidence="1">
        <text>[protein]-peptidylproline (omega=180) = [protein]-peptidylproline (omega=0)</text>
        <dbReference type="Rhea" id="RHEA:16237"/>
        <dbReference type="Rhea" id="RHEA-COMP:10747"/>
        <dbReference type="Rhea" id="RHEA-COMP:10748"/>
        <dbReference type="ChEBI" id="CHEBI:83833"/>
        <dbReference type="ChEBI" id="CHEBI:83834"/>
        <dbReference type="EC" id="5.2.1.8"/>
    </reaction>
</comment>
<comment type="subcellular location">
    <subcellularLocation>
        <location>Cytoplasm</location>
    </subcellularLocation>
    <text evidence="1">About half TF is bound to the ribosome near the polypeptide exit tunnel while the other half is free in the cytoplasm.</text>
</comment>
<comment type="domain">
    <text evidence="1">Consists of 3 domains; the N-terminus binds the ribosome, the middle domain has PPIase activity, while the C-terminus has intrinsic chaperone activity on its own.</text>
</comment>
<comment type="similarity">
    <text evidence="1">Belongs to the FKBP-type PPIase family. Tig subfamily.</text>
</comment>
<gene>
    <name evidence="1" type="primary">tig</name>
    <name type="ordered locus">BA_4705</name>
    <name type="ordered locus">GBAA_4705</name>
    <name type="ordered locus">BAS4370</name>
</gene>
<organism>
    <name type="scientific">Bacillus anthracis</name>
    <dbReference type="NCBI Taxonomy" id="1392"/>
    <lineage>
        <taxon>Bacteria</taxon>
        <taxon>Bacillati</taxon>
        <taxon>Bacillota</taxon>
        <taxon>Bacilli</taxon>
        <taxon>Bacillales</taxon>
        <taxon>Bacillaceae</taxon>
        <taxon>Bacillus</taxon>
        <taxon>Bacillus cereus group</taxon>
    </lineage>
</organism>
<keyword id="KW-0131">Cell cycle</keyword>
<keyword id="KW-0132">Cell division</keyword>
<keyword id="KW-0143">Chaperone</keyword>
<keyword id="KW-0963">Cytoplasm</keyword>
<keyword id="KW-0413">Isomerase</keyword>
<keyword id="KW-1185">Reference proteome</keyword>
<keyword id="KW-0697">Rotamase</keyword>
<evidence type="ECO:0000255" key="1">
    <source>
        <dbReference type="HAMAP-Rule" id="MF_00303"/>
    </source>
</evidence>
<reference key="1">
    <citation type="journal article" date="2003" name="Nature">
        <title>The genome sequence of Bacillus anthracis Ames and comparison to closely related bacteria.</title>
        <authorList>
            <person name="Read T.D."/>
            <person name="Peterson S.N."/>
            <person name="Tourasse N.J."/>
            <person name="Baillie L.W."/>
            <person name="Paulsen I.T."/>
            <person name="Nelson K.E."/>
            <person name="Tettelin H."/>
            <person name="Fouts D.E."/>
            <person name="Eisen J.A."/>
            <person name="Gill S.R."/>
            <person name="Holtzapple E.K."/>
            <person name="Okstad O.A."/>
            <person name="Helgason E."/>
            <person name="Rilstone J."/>
            <person name="Wu M."/>
            <person name="Kolonay J.F."/>
            <person name="Beanan M.J."/>
            <person name="Dodson R.J."/>
            <person name="Brinkac L.M."/>
            <person name="Gwinn M.L."/>
            <person name="DeBoy R.T."/>
            <person name="Madpu R."/>
            <person name="Daugherty S.C."/>
            <person name="Durkin A.S."/>
            <person name="Haft D.H."/>
            <person name="Nelson W.C."/>
            <person name="Peterson J.D."/>
            <person name="Pop M."/>
            <person name="Khouri H.M."/>
            <person name="Radune D."/>
            <person name="Benton J.L."/>
            <person name="Mahamoud Y."/>
            <person name="Jiang L."/>
            <person name="Hance I.R."/>
            <person name="Weidman J.F."/>
            <person name="Berry K.J."/>
            <person name="Plaut R.D."/>
            <person name="Wolf A.M."/>
            <person name="Watkins K.L."/>
            <person name="Nierman W.C."/>
            <person name="Hazen A."/>
            <person name="Cline R.T."/>
            <person name="Redmond C."/>
            <person name="Thwaite J.E."/>
            <person name="White O."/>
            <person name="Salzberg S.L."/>
            <person name="Thomason B."/>
            <person name="Friedlander A.M."/>
            <person name="Koehler T.M."/>
            <person name="Hanna P.C."/>
            <person name="Kolstoe A.-B."/>
            <person name="Fraser C.M."/>
        </authorList>
    </citation>
    <scope>NUCLEOTIDE SEQUENCE [LARGE SCALE GENOMIC DNA]</scope>
    <source>
        <strain>Ames / isolate Porton</strain>
    </source>
</reference>
<reference key="2">
    <citation type="journal article" date="2009" name="J. Bacteriol.">
        <title>The complete genome sequence of Bacillus anthracis Ames 'Ancestor'.</title>
        <authorList>
            <person name="Ravel J."/>
            <person name="Jiang L."/>
            <person name="Stanley S.T."/>
            <person name="Wilson M.R."/>
            <person name="Decker R.S."/>
            <person name="Read T.D."/>
            <person name="Worsham P."/>
            <person name="Keim P.S."/>
            <person name="Salzberg S.L."/>
            <person name="Fraser-Liggett C.M."/>
            <person name="Rasko D.A."/>
        </authorList>
    </citation>
    <scope>NUCLEOTIDE SEQUENCE [LARGE SCALE GENOMIC DNA]</scope>
    <source>
        <strain>Ames ancestor</strain>
    </source>
</reference>
<reference key="3">
    <citation type="submission" date="2004-01" db="EMBL/GenBank/DDBJ databases">
        <title>Complete genome sequence of Bacillus anthracis Sterne.</title>
        <authorList>
            <person name="Brettin T.S."/>
            <person name="Bruce D."/>
            <person name="Challacombe J.F."/>
            <person name="Gilna P."/>
            <person name="Han C."/>
            <person name="Hill K."/>
            <person name="Hitchcock P."/>
            <person name="Jackson P."/>
            <person name="Keim P."/>
            <person name="Longmire J."/>
            <person name="Lucas S."/>
            <person name="Okinaka R."/>
            <person name="Richardson P."/>
            <person name="Rubin E."/>
            <person name="Tice H."/>
        </authorList>
    </citation>
    <scope>NUCLEOTIDE SEQUENCE [LARGE SCALE GENOMIC DNA]</scope>
    <source>
        <strain>Sterne</strain>
    </source>
</reference>
<protein>
    <recommendedName>
        <fullName evidence="1">Trigger factor</fullName>
        <shortName evidence="1">TF</shortName>
        <ecNumber evidence="1">5.2.1.8</ecNumber>
    </recommendedName>
    <alternativeName>
        <fullName evidence="1">PPIase</fullName>
    </alternativeName>
</protein>
<proteinExistence type="inferred from homology"/>
<feature type="chain" id="PRO_0000179305" description="Trigger factor">
    <location>
        <begin position="1"/>
        <end position="425"/>
    </location>
</feature>
<feature type="domain" description="PPIase FKBP-type" evidence="1">
    <location>
        <begin position="163"/>
        <end position="248"/>
    </location>
</feature>
<sequence>MAAKWEKLEGNVGVLTIEVDAKEVNNSIDAAFKKVVKTINVPGFRKGKMPRPLFEQRFGIESLYQDALDIILPKAYGEAIDEAGIFPVAHPEIDIEKFEKNANLIFTAKVTVKPEVKLGEYKGLAVEKVETTVTDEDVENELKSLQERQAELVVKEEGTVENGDTAVIDFEGFVDGEAFEGGKGENYSLAIGSGTFIPGFEEQVIGLKSGESKDVEVSFPEEYHAAELAGKPATFKVTVHEIKTKELPELNDEFAKEADEAVATLDELKAKLRTNLEEGKKHEAEHKVRDEVVELAAANAEIDIPEAMIDTELDRMVREFEQRLSQQGMNLELYYQFTGTDADKLKEQMKEDAQKRVRINLVLEAIIEAENIEVTEEEVTAEVEKMAEMYGMPVDAIKQALGSVDALAEDLKVRKAVDFLVENAA</sequence>